<feature type="chain" id="PRO_1000047740" description="Porphobilinogen deaminase">
    <location>
        <begin position="1"/>
        <end position="329"/>
    </location>
</feature>
<feature type="modified residue" description="S-(dipyrrolylmethanemethyl)cysteine" evidence="1">
    <location>
        <position position="250"/>
    </location>
</feature>
<accession>A3N700</accession>
<sequence>MNSETLPAELPATLTIASRESRLAMWQAEHVRDALRKLYPACDVKILGMTTRGDQILDRTLSKVGGKGLFVKELESALADGRADLAVHSLKDVPMVLPEGFALAAVMSREDPRDAFVSNDYASLDALPAGAVVGTSSLRREAMLRARHPRLDVRPLRGNLDTRLAKLDRGDYAAIILAAAGLKRLGLAARIRALLDVDDSLPAAGQGALGIEIAARRADVAAWLAPLHDHASALAVEAERAVSRALGGSCEVPLAAHAVWRGGELHLTGSVSTTDGARVLAAHAHARAATAADALALGRRVSDALERQGARAIVDALVAASAQAQKGGA</sequence>
<comment type="function">
    <text evidence="1">Tetrapolymerization of the monopyrrole PBG into the hydroxymethylbilane pre-uroporphyrinogen in several discrete steps.</text>
</comment>
<comment type="catalytic activity">
    <reaction evidence="1">
        <text>4 porphobilinogen + H2O = hydroxymethylbilane + 4 NH4(+)</text>
        <dbReference type="Rhea" id="RHEA:13185"/>
        <dbReference type="ChEBI" id="CHEBI:15377"/>
        <dbReference type="ChEBI" id="CHEBI:28938"/>
        <dbReference type="ChEBI" id="CHEBI:57845"/>
        <dbReference type="ChEBI" id="CHEBI:58126"/>
        <dbReference type="EC" id="2.5.1.61"/>
    </reaction>
</comment>
<comment type="cofactor">
    <cofactor evidence="1">
        <name>dipyrromethane</name>
        <dbReference type="ChEBI" id="CHEBI:60342"/>
    </cofactor>
    <text evidence="1">Binds 1 dipyrromethane group covalently.</text>
</comment>
<comment type="pathway">
    <text evidence="1">Porphyrin-containing compound metabolism; protoporphyrin-IX biosynthesis; coproporphyrinogen-III from 5-aminolevulinate: step 2/4.</text>
</comment>
<comment type="subunit">
    <text evidence="1">Monomer.</text>
</comment>
<comment type="miscellaneous">
    <text evidence="1">The porphobilinogen subunits are added to the dipyrromethane group.</text>
</comment>
<comment type="similarity">
    <text evidence="1">Belongs to the HMBS family.</text>
</comment>
<dbReference type="EC" id="2.5.1.61" evidence="1"/>
<dbReference type="EMBL" id="CP000570">
    <property type="protein sequence ID" value="ABN82304.1"/>
    <property type="molecule type" value="Genomic_DNA"/>
</dbReference>
<dbReference type="RefSeq" id="WP_011851244.1">
    <property type="nucleotide sequence ID" value="NC_009074.1"/>
</dbReference>
<dbReference type="SMR" id="A3N700"/>
<dbReference type="KEGG" id="bpd:BURPS668_1071"/>
<dbReference type="HOGENOM" id="CLU_019704_0_2_4"/>
<dbReference type="UniPathway" id="UPA00251">
    <property type="reaction ID" value="UER00319"/>
</dbReference>
<dbReference type="GO" id="GO:0005737">
    <property type="term" value="C:cytoplasm"/>
    <property type="evidence" value="ECO:0007669"/>
    <property type="project" value="TreeGrafter"/>
</dbReference>
<dbReference type="GO" id="GO:0004418">
    <property type="term" value="F:hydroxymethylbilane synthase activity"/>
    <property type="evidence" value="ECO:0007669"/>
    <property type="project" value="UniProtKB-UniRule"/>
</dbReference>
<dbReference type="GO" id="GO:0006782">
    <property type="term" value="P:protoporphyrinogen IX biosynthetic process"/>
    <property type="evidence" value="ECO:0007669"/>
    <property type="project" value="UniProtKB-UniRule"/>
</dbReference>
<dbReference type="CDD" id="cd13646">
    <property type="entry name" value="PBP2_EcHMBS_like"/>
    <property type="match status" value="1"/>
</dbReference>
<dbReference type="FunFam" id="3.40.190.10:FF:000004">
    <property type="entry name" value="Porphobilinogen deaminase"/>
    <property type="match status" value="1"/>
</dbReference>
<dbReference type="FunFam" id="3.40.190.10:FF:000005">
    <property type="entry name" value="Porphobilinogen deaminase"/>
    <property type="match status" value="1"/>
</dbReference>
<dbReference type="Gene3D" id="3.40.190.10">
    <property type="entry name" value="Periplasmic binding protein-like II"/>
    <property type="match status" value="2"/>
</dbReference>
<dbReference type="Gene3D" id="3.30.160.40">
    <property type="entry name" value="Porphobilinogen deaminase, C-terminal domain"/>
    <property type="match status" value="1"/>
</dbReference>
<dbReference type="HAMAP" id="MF_00260">
    <property type="entry name" value="Porphobil_deam"/>
    <property type="match status" value="1"/>
</dbReference>
<dbReference type="InterPro" id="IPR000860">
    <property type="entry name" value="HemC"/>
</dbReference>
<dbReference type="InterPro" id="IPR022419">
    <property type="entry name" value="Porphobilin_deaminase_cofac_BS"/>
</dbReference>
<dbReference type="InterPro" id="IPR022417">
    <property type="entry name" value="Porphobilin_deaminase_N"/>
</dbReference>
<dbReference type="InterPro" id="IPR022418">
    <property type="entry name" value="Porphobilinogen_deaminase_C"/>
</dbReference>
<dbReference type="InterPro" id="IPR036803">
    <property type="entry name" value="Porphobilinogen_deaminase_C_sf"/>
</dbReference>
<dbReference type="NCBIfam" id="TIGR00212">
    <property type="entry name" value="hemC"/>
    <property type="match status" value="1"/>
</dbReference>
<dbReference type="PANTHER" id="PTHR11557">
    <property type="entry name" value="PORPHOBILINOGEN DEAMINASE"/>
    <property type="match status" value="1"/>
</dbReference>
<dbReference type="PANTHER" id="PTHR11557:SF0">
    <property type="entry name" value="PORPHOBILINOGEN DEAMINASE"/>
    <property type="match status" value="1"/>
</dbReference>
<dbReference type="Pfam" id="PF01379">
    <property type="entry name" value="Porphobil_deam"/>
    <property type="match status" value="1"/>
</dbReference>
<dbReference type="Pfam" id="PF03900">
    <property type="entry name" value="Porphobil_deamC"/>
    <property type="match status" value="1"/>
</dbReference>
<dbReference type="PIRSF" id="PIRSF001438">
    <property type="entry name" value="4pyrrol_synth_OHMeBilane_synth"/>
    <property type="match status" value="1"/>
</dbReference>
<dbReference type="PRINTS" id="PR00151">
    <property type="entry name" value="PORPHBDMNASE"/>
</dbReference>
<dbReference type="SUPFAM" id="SSF53850">
    <property type="entry name" value="Periplasmic binding protein-like II"/>
    <property type="match status" value="1"/>
</dbReference>
<dbReference type="SUPFAM" id="SSF54782">
    <property type="entry name" value="Porphobilinogen deaminase (hydroxymethylbilane synthase), C-terminal domain"/>
    <property type="match status" value="1"/>
</dbReference>
<dbReference type="PROSITE" id="PS00533">
    <property type="entry name" value="PORPHOBILINOGEN_DEAM"/>
    <property type="match status" value="1"/>
</dbReference>
<protein>
    <recommendedName>
        <fullName evidence="1">Porphobilinogen deaminase</fullName>
        <shortName evidence="1">PBG</shortName>
        <ecNumber evidence="1">2.5.1.61</ecNumber>
    </recommendedName>
    <alternativeName>
        <fullName evidence="1">Hydroxymethylbilane synthase</fullName>
        <shortName evidence="1">HMBS</shortName>
    </alternativeName>
    <alternativeName>
        <fullName evidence="1">Pre-uroporphyrinogen synthase</fullName>
    </alternativeName>
</protein>
<organism>
    <name type="scientific">Burkholderia pseudomallei (strain 668)</name>
    <dbReference type="NCBI Taxonomy" id="320373"/>
    <lineage>
        <taxon>Bacteria</taxon>
        <taxon>Pseudomonadati</taxon>
        <taxon>Pseudomonadota</taxon>
        <taxon>Betaproteobacteria</taxon>
        <taxon>Burkholderiales</taxon>
        <taxon>Burkholderiaceae</taxon>
        <taxon>Burkholderia</taxon>
        <taxon>pseudomallei group</taxon>
    </lineage>
</organism>
<keyword id="KW-0627">Porphyrin biosynthesis</keyword>
<keyword id="KW-0808">Transferase</keyword>
<reference key="1">
    <citation type="journal article" date="2010" name="Genome Biol. Evol.">
        <title>Continuing evolution of Burkholderia mallei through genome reduction and large-scale rearrangements.</title>
        <authorList>
            <person name="Losada L."/>
            <person name="Ronning C.M."/>
            <person name="DeShazer D."/>
            <person name="Woods D."/>
            <person name="Fedorova N."/>
            <person name="Kim H.S."/>
            <person name="Shabalina S.A."/>
            <person name="Pearson T.R."/>
            <person name="Brinkac L."/>
            <person name="Tan P."/>
            <person name="Nandi T."/>
            <person name="Crabtree J."/>
            <person name="Badger J."/>
            <person name="Beckstrom-Sternberg S."/>
            <person name="Saqib M."/>
            <person name="Schutzer S.E."/>
            <person name="Keim P."/>
            <person name="Nierman W.C."/>
        </authorList>
    </citation>
    <scope>NUCLEOTIDE SEQUENCE [LARGE SCALE GENOMIC DNA]</scope>
    <source>
        <strain>668</strain>
    </source>
</reference>
<name>HEM3_BURP6</name>
<evidence type="ECO:0000255" key="1">
    <source>
        <dbReference type="HAMAP-Rule" id="MF_00260"/>
    </source>
</evidence>
<proteinExistence type="inferred from homology"/>
<gene>
    <name evidence="1" type="primary">hemC</name>
    <name type="ordered locus">BURPS668_1071</name>
</gene>